<accession>Q88S84</accession>
<accession>F9ULB0</accession>
<feature type="chain" id="PRO_0000312610" description="L-arabinose isomerase">
    <location>
        <begin position="1"/>
        <end position="474"/>
    </location>
</feature>
<feature type="binding site" evidence="1">
    <location>
        <position position="306"/>
    </location>
    <ligand>
        <name>Mn(2+)</name>
        <dbReference type="ChEBI" id="CHEBI:29035"/>
    </ligand>
</feature>
<feature type="binding site" evidence="1">
    <location>
        <position position="331"/>
    </location>
    <ligand>
        <name>Mn(2+)</name>
        <dbReference type="ChEBI" id="CHEBI:29035"/>
    </ligand>
</feature>
<feature type="binding site" evidence="1">
    <location>
        <position position="348"/>
    </location>
    <ligand>
        <name>Mn(2+)</name>
        <dbReference type="ChEBI" id="CHEBI:29035"/>
    </ligand>
</feature>
<feature type="binding site" evidence="1">
    <location>
        <position position="447"/>
    </location>
    <ligand>
        <name>Mn(2+)</name>
        <dbReference type="ChEBI" id="CHEBI:29035"/>
    </ligand>
</feature>
<comment type="function">
    <text evidence="1">Catalyzes the conversion of L-arabinose to L-ribulose.</text>
</comment>
<comment type="catalytic activity">
    <reaction evidence="1">
        <text>beta-L-arabinopyranose = L-ribulose</text>
        <dbReference type="Rhea" id="RHEA:14821"/>
        <dbReference type="ChEBI" id="CHEBI:16880"/>
        <dbReference type="ChEBI" id="CHEBI:40886"/>
        <dbReference type="EC" id="5.3.1.4"/>
    </reaction>
</comment>
<comment type="cofactor">
    <cofactor evidence="1">
        <name>Mn(2+)</name>
        <dbReference type="ChEBI" id="CHEBI:29035"/>
    </cofactor>
    <text evidence="1">Binds 1 Mn(2+) ion per subunit.</text>
</comment>
<comment type="pathway">
    <text evidence="1">Carbohydrate degradation; L-arabinose degradation via L-ribulose; D-xylulose 5-phosphate from L-arabinose (bacterial route): step 1/3.</text>
</comment>
<comment type="similarity">
    <text evidence="1">Belongs to the arabinose isomerase family.</text>
</comment>
<dbReference type="EC" id="5.3.1.4" evidence="1"/>
<dbReference type="EMBL" id="AL935263">
    <property type="protein sequence ID" value="CCC80517.1"/>
    <property type="molecule type" value="Genomic_DNA"/>
</dbReference>
<dbReference type="RefSeq" id="WP_003642915.1">
    <property type="nucleotide sequence ID" value="NC_004567.2"/>
</dbReference>
<dbReference type="RefSeq" id="YP_004891031.1">
    <property type="nucleotide sequence ID" value="NC_004567.2"/>
</dbReference>
<dbReference type="SMR" id="Q88S84"/>
<dbReference type="STRING" id="220668.lp_3554"/>
<dbReference type="EnsemblBacteria" id="CCC80517">
    <property type="protein sequence ID" value="CCC80517"/>
    <property type="gene ID" value="lp_3554"/>
</dbReference>
<dbReference type="GeneID" id="77216582"/>
<dbReference type="KEGG" id="lpl:lp_3554"/>
<dbReference type="PATRIC" id="fig|220668.9.peg.2964"/>
<dbReference type="eggNOG" id="COG2160">
    <property type="taxonomic scope" value="Bacteria"/>
</dbReference>
<dbReference type="HOGENOM" id="CLU_045663_0_0_9"/>
<dbReference type="OrthoDB" id="9765600at2"/>
<dbReference type="PhylomeDB" id="Q88S84"/>
<dbReference type="BRENDA" id="5.3.1.4">
    <property type="organism ID" value="2849"/>
</dbReference>
<dbReference type="UniPathway" id="UPA00145">
    <property type="reaction ID" value="UER00565"/>
</dbReference>
<dbReference type="Proteomes" id="UP000000432">
    <property type="component" value="Chromosome"/>
</dbReference>
<dbReference type="GO" id="GO:0005829">
    <property type="term" value="C:cytosol"/>
    <property type="evidence" value="ECO:0007669"/>
    <property type="project" value="TreeGrafter"/>
</dbReference>
<dbReference type="GO" id="GO:0008733">
    <property type="term" value="F:L-arabinose isomerase activity"/>
    <property type="evidence" value="ECO:0007669"/>
    <property type="project" value="UniProtKB-UniRule"/>
</dbReference>
<dbReference type="GO" id="GO:0030145">
    <property type="term" value="F:manganese ion binding"/>
    <property type="evidence" value="ECO:0007669"/>
    <property type="project" value="UniProtKB-UniRule"/>
</dbReference>
<dbReference type="GO" id="GO:0019569">
    <property type="term" value="P:L-arabinose catabolic process to xylulose 5-phosphate"/>
    <property type="evidence" value="ECO:0007669"/>
    <property type="project" value="UniProtKB-UniRule"/>
</dbReference>
<dbReference type="Gene3D" id="3.40.50.10940">
    <property type="match status" value="1"/>
</dbReference>
<dbReference type="HAMAP" id="MF_00519">
    <property type="entry name" value="Arabinose_Isome"/>
    <property type="match status" value="1"/>
</dbReference>
<dbReference type="InterPro" id="IPR024664">
    <property type="entry name" value="Ara_Isoase_C"/>
</dbReference>
<dbReference type="InterPro" id="IPR055390">
    <property type="entry name" value="AraA_central"/>
</dbReference>
<dbReference type="InterPro" id="IPR055389">
    <property type="entry name" value="AraA_N"/>
</dbReference>
<dbReference type="InterPro" id="IPR038583">
    <property type="entry name" value="AraA_N_sf"/>
</dbReference>
<dbReference type="InterPro" id="IPR004216">
    <property type="entry name" value="Fuc/Ara_isomerase_C"/>
</dbReference>
<dbReference type="InterPro" id="IPR009015">
    <property type="entry name" value="Fucose_isomerase_N/cen_sf"/>
</dbReference>
<dbReference type="InterPro" id="IPR003762">
    <property type="entry name" value="Lara_isomerase"/>
</dbReference>
<dbReference type="NCBIfam" id="NF002795">
    <property type="entry name" value="PRK02929.1"/>
    <property type="match status" value="1"/>
</dbReference>
<dbReference type="PANTHER" id="PTHR38464">
    <property type="entry name" value="L-ARABINOSE ISOMERASE"/>
    <property type="match status" value="1"/>
</dbReference>
<dbReference type="PANTHER" id="PTHR38464:SF1">
    <property type="entry name" value="L-ARABINOSE ISOMERASE"/>
    <property type="match status" value="1"/>
</dbReference>
<dbReference type="Pfam" id="PF24856">
    <property type="entry name" value="AraA_central"/>
    <property type="match status" value="1"/>
</dbReference>
<dbReference type="Pfam" id="PF02610">
    <property type="entry name" value="AraA_N"/>
    <property type="match status" value="1"/>
</dbReference>
<dbReference type="Pfam" id="PF11762">
    <property type="entry name" value="Arabinose_Iso_C"/>
    <property type="match status" value="1"/>
</dbReference>
<dbReference type="PIRSF" id="PIRSF001478">
    <property type="entry name" value="L-ara_isomerase"/>
    <property type="match status" value="1"/>
</dbReference>
<dbReference type="SUPFAM" id="SSF50443">
    <property type="entry name" value="FucI/AraA C-terminal domain-like"/>
    <property type="match status" value="1"/>
</dbReference>
<dbReference type="SUPFAM" id="SSF53743">
    <property type="entry name" value="FucI/AraA N-terminal and middle domains"/>
    <property type="match status" value="1"/>
</dbReference>
<gene>
    <name evidence="1" type="primary">araA</name>
    <name type="ordered locus">lp_3554</name>
</gene>
<evidence type="ECO:0000255" key="1">
    <source>
        <dbReference type="HAMAP-Rule" id="MF_00519"/>
    </source>
</evidence>
<keyword id="KW-0054">Arabinose catabolism</keyword>
<keyword id="KW-0119">Carbohydrate metabolism</keyword>
<keyword id="KW-0413">Isomerase</keyword>
<keyword id="KW-0464">Manganese</keyword>
<keyword id="KW-0479">Metal-binding</keyword>
<keyword id="KW-1185">Reference proteome</keyword>
<organism>
    <name type="scientific">Lactiplantibacillus plantarum (strain ATCC BAA-793 / NCIMB 8826 / WCFS1)</name>
    <name type="common">Lactobacillus plantarum</name>
    <dbReference type="NCBI Taxonomy" id="220668"/>
    <lineage>
        <taxon>Bacteria</taxon>
        <taxon>Bacillati</taxon>
        <taxon>Bacillota</taxon>
        <taxon>Bacilli</taxon>
        <taxon>Lactobacillales</taxon>
        <taxon>Lactobacillaceae</taxon>
        <taxon>Lactiplantibacillus</taxon>
    </lineage>
</organism>
<reference key="1">
    <citation type="journal article" date="2003" name="Proc. Natl. Acad. Sci. U.S.A.">
        <title>Complete genome sequence of Lactobacillus plantarum WCFS1.</title>
        <authorList>
            <person name="Kleerebezem M."/>
            <person name="Boekhorst J."/>
            <person name="van Kranenburg R."/>
            <person name="Molenaar D."/>
            <person name="Kuipers O.P."/>
            <person name="Leer R."/>
            <person name="Tarchini R."/>
            <person name="Peters S.A."/>
            <person name="Sandbrink H.M."/>
            <person name="Fiers M.W.E.J."/>
            <person name="Stiekema W."/>
            <person name="Klein Lankhorst R.M."/>
            <person name="Bron P.A."/>
            <person name="Hoffer S.M."/>
            <person name="Nierop Groot M.N."/>
            <person name="Kerkhoven R."/>
            <person name="De Vries M."/>
            <person name="Ursing B."/>
            <person name="De Vos W.M."/>
            <person name="Siezen R.J."/>
        </authorList>
    </citation>
    <scope>NUCLEOTIDE SEQUENCE [LARGE SCALE GENOMIC DNA]</scope>
    <source>
        <strain>ATCC BAA-793 / NCIMB 8826 / WCFS1</strain>
    </source>
</reference>
<reference key="2">
    <citation type="journal article" date="2012" name="J. Bacteriol.">
        <title>Complete resequencing and reannotation of the Lactobacillus plantarum WCFS1 genome.</title>
        <authorList>
            <person name="Siezen R.J."/>
            <person name="Francke C."/>
            <person name="Renckens B."/>
            <person name="Boekhorst J."/>
            <person name="Wels M."/>
            <person name="Kleerebezem M."/>
            <person name="van Hijum S.A."/>
        </authorList>
    </citation>
    <scope>NUCLEOTIDE SEQUENCE [LARGE SCALE GENOMIC DNA]</scope>
    <scope>GENOME REANNOTATION</scope>
    <source>
        <strain>ATCC BAA-793 / NCIMB 8826 / WCFS1</strain>
    </source>
</reference>
<name>ARAA_LACPL</name>
<sequence length="474" mass="53573">MLSVPDYEFWFVTGSQHLYGEEQLKSVAKDAQDIADKLNASGKLPYKVVFKDVMTTAESITNFMKEVNYNDKVAGVITWMHTFSPAKNWIRGTELLQKPLLHLATQYLNNIPYADIDFDYMNLNQSAHGDREYAYINARLQKHNKIVYGYWGDEDVQEQIARWEDVAVAYNESFKVKVARFGDTMRNVAVTEGDKVEAQIKMGWTVDYYGIGDLVEEINKVSDADVDKEYADLESRYEMVQGDNDADTYKHSVRVQLAQYLGIKRFLERGGYTAFTTNFEDLWGMEQLPGLASQLLIRDGYGFGAEGDWKTAALGRVMKIMSHNKQTAFMEDYTLDLRHGHEAILGSHMLEVDPSIASDKPRVEVHPLDIGGKDDPARLVFTGSEGEAIDVTVADFRDGFKMISYAVDANKPEAETPNLPVAKQLWTPKMGLKKGALEWMQAGGGHHTMLSFSLTEEQMEDYATMVGMTKAFLK</sequence>
<proteinExistence type="inferred from homology"/>
<protein>
    <recommendedName>
        <fullName evidence="1">L-arabinose isomerase</fullName>
        <ecNumber evidence="1">5.3.1.4</ecNumber>
    </recommendedName>
</protein>